<proteinExistence type="evidence at protein level"/>
<organism>
    <name type="scientific">Plasmodium falciparum (isolate 3D7)</name>
    <dbReference type="NCBI Taxonomy" id="36329"/>
    <lineage>
        <taxon>Eukaryota</taxon>
        <taxon>Sar</taxon>
        <taxon>Alveolata</taxon>
        <taxon>Apicomplexa</taxon>
        <taxon>Aconoidasida</taxon>
        <taxon>Haemosporida</taxon>
        <taxon>Plasmodiidae</taxon>
        <taxon>Plasmodium</taxon>
        <taxon>Plasmodium (Laverania)</taxon>
    </lineage>
</organism>
<sequence length="1218" mass="143059">MYIEEIILDGFKSYPTKTVIGPFHPQFNAITGLNGSGKSNVLDAICFVMGINNLNLIRVNRLDELIYKQGQAGITKGSVTIKFNNEEKPSPLQEPYRDMKNITITRQIVLGGRNRYLLNSHNAKPKDISDFFQSLKLNINNPHFLIMQGKITKVINMKPIELLGLIEESSGTKLYEVKRTNAIKLMVKKDQKLGEINKVLFEEIEPTLVKLKKEKEEYNKFVSNNEEIEKYEKVEIAYKYYVAKKMMTKCEEKIEDAKSEEKILEKGIKEIDKDIEKYKIEKEKIVKETNTASEPMKILISQKEELEKKISQLKSEAKMENKEKAKEKRRREDIKKEINNLQNKLDDYQKNNEKNNKNLKSYEDLKKKIEILKEELNEKQLTMNCLLSAGTNNNEYTGSFREQLKNYKTNLSKAETQINNFLQNNKHLEKEIMTLKEQRKKYEKEYNEISKEKDIEEKKKKLCEQELDKLNKEYNNFMELDTLKTDKNILYNDMEKLQQELQVLKNIINSVKIDYKIPSNMKSTDVLGQIYKLIKIKKEYINTALAVHLILGGKLTYLLVQNKEHSKRLFEYNNFSSGSKRVTLLPLEDCVISREVHEKHIEECRRNVGLNIKDKNDVIYFLDIMEYDKNLERIIQYLFNGTLICSNVDLCKKITYNPNKKLSYTTITLEGDKFDTSGSMSGGSNKNINLFLLNYEKYKHKKEQYHDNENKLKEVSEKLKSLEKAEEKKKIISKELQIYENNLNNIENRMETSKYGSVNKKIEEHKNEIDKGRNELSELYKEQKKLTEVIRKLEKDISEYEANKDKKEEDLKETIKKLKNKIKQLETEEHKKKEEIDDVLLQIENYKKQKEKETNDLSSTDEIINEIEKKIEDIEKNINITKENLKELENKITELQSSFSSYENEMKHVVKKIEDLEKKKSENILDLKKLENTLLDLQKDLKTSSDTVKYLYKTHVWIESYEPLFNKKYTPYDFENFRHDVIQKKIQALQNEQNKLSININRKAVQMYEQVQVDYKDLVTKKSQVEEDKKKIQEVIADLDVKKSESLLAMYQQINEYFQAIFSTLLNNAQAKLSIVDGDLANGIEMKIAFNNNWKESLTELSGGQRSLLALSLILALLKVRTVPMYILDEIDAALDLNHTQNIGDMIRTQFPHSQFIIVSLKEGMFSHADVLFKMRFIDGISTVNRHALDIRQNTNKKEVQEVKRRRVTIHDKEPDHD</sequence>
<feature type="chain" id="PRO_0000388758" description="Structural maintenance of chromosomes protein 2">
    <location>
        <begin position="1"/>
        <end position="1218"/>
    </location>
</feature>
<feature type="domain" description="SMC hinge">
    <location>
        <begin position="525"/>
        <end position="654"/>
    </location>
</feature>
<feature type="coiled-coil region" evidence="4">
    <location>
        <begin position="209"/>
        <end position="517"/>
    </location>
</feature>
<feature type="coiled-coil region" evidence="4">
    <location>
        <begin position="693"/>
        <end position="949"/>
    </location>
</feature>
<feature type="coiled-coil region" evidence="4">
    <location>
        <begin position="978"/>
        <end position="1045"/>
    </location>
</feature>
<feature type="binding site" evidence="4">
    <location>
        <begin position="32"/>
        <end position="39"/>
    </location>
    <ligand>
        <name>ATP</name>
        <dbReference type="ChEBI" id="CHEBI:30616"/>
    </ligand>
</feature>
<dbReference type="EMBL" id="AL844509">
    <property type="protein sequence ID" value="CAD52328.1"/>
    <property type="molecule type" value="Genomic_DNA"/>
</dbReference>
<dbReference type="RefSeq" id="XP_001349920.1">
    <property type="nucleotide sequence ID" value="XM_001349884.1"/>
</dbReference>
<dbReference type="SMR" id="Q8IED2"/>
<dbReference type="BioGRID" id="1209245">
    <property type="interactions" value="1"/>
</dbReference>
<dbReference type="FunCoup" id="Q8IED2">
    <property type="interactions" value="443"/>
</dbReference>
<dbReference type="IntAct" id="Q8IED2">
    <property type="interactions" value="1"/>
</dbReference>
<dbReference type="STRING" id="36329.Q8IED2"/>
<dbReference type="PaxDb" id="5833-MAL13P1.96"/>
<dbReference type="EnsemblProtists" id="CAD52328">
    <property type="protein sequence ID" value="CAD52328"/>
    <property type="gene ID" value="PF3D7_1318400"/>
</dbReference>
<dbReference type="KEGG" id="pfa:PF3D7_1318400"/>
<dbReference type="VEuPathDB" id="PlasmoDB:PF3D7_1318400"/>
<dbReference type="HOGENOM" id="CLU_001042_9_0_1"/>
<dbReference type="InParanoid" id="Q8IED2"/>
<dbReference type="OMA" id="THNKIAM"/>
<dbReference type="OrthoDB" id="10255539at2759"/>
<dbReference type="PhylomeDB" id="Q8IED2"/>
<dbReference type="Reactome" id="R-PFA-2299718">
    <property type="pathway name" value="Condensation of Prophase Chromosomes"/>
</dbReference>
<dbReference type="Reactome" id="R-PFA-2514853">
    <property type="pathway name" value="Condensation of Prometaphase Chromosomes"/>
</dbReference>
<dbReference type="Proteomes" id="UP000001450">
    <property type="component" value="Chromosome 13"/>
</dbReference>
<dbReference type="GO" id="GO:0000785">
    <property type="term" value="C:chromatin"/>
    <property type="evidence" value="ECO:0000318"/>
    <property type="project" value="GO_Central"/>
</dbReference>
<dbReference type="GO" id="GO:0000793">
    <property type="term" value="C:condensed chromosome"/>
    <property type="evidence" value="ECO:0000318"/>
    <property type="project" value="GO_Central"/>
</dbReference>
<dbReference type="GO" id="GO:0000796">
    <property type="term" value="C:condensin complex"/>
    <property type="evidence" value="ECO:0000250"/>
    <property type="project" value="UniProtKB"/>
</dbReference>
<dbReference type="GO" id="GO:0005634">
    <property type="term" value="C:nucleus"/>
    <property type="evidence" value="ECO:0007669"/>
    <property type="project" value="UniProtKB-SubCell"/>
</dbReference>
<dbReference type="GO" id="GO:0005524">
    <property type="term" value="F:ATP binding"/>
    <property type="evidence" value="ECO:0007669"/>
    <property type="project" value="UniProtKB-KW"/>
</dbReference>
<dbReference type="GO" id="GO:0016887">
    <property type="term" value="F:ATP hydrolysis activity"/>
    <property type="evidence" value="ECO:0007669"/>
    <property type="project" value="InterPro"/>
</dbReference>
<dbReference type="GO" id="GO:0003682">
    <property type="term" value="F:chromatin binding"/>
    <property type="evidence" value="ECO:0000318"/>
    <property type="project" value="GO_Central"/>
</dbReference>
<dbReference type="GO" id="GO:0051301">
    <property type="term" value="P:cell division"/>
    <property type="evidence" value="ECO:0007669"/>
    <property type="project" value="UniProtKB-KW"/>
</dbReference>
<dbReference type="GO" id="GO:0007076">
    <property type="term" value="P:mitotic chromosome condensation"/>
    <property type="evidence" value="ECO:0000250"/>
    <property type="project" value="UniProtKB"/>
</dbReference>
<dbReference type="GO" id="GO:0000070">
    <property type="term" value="P:mitotic sister chromatid segregation"/>
    <property type="evidence" value="ECO:0000250"/>
    <property type="project" value="GeneDB"/>
</dbReference>
<dbReference type="CDD" id="cd03273">
    <property type="entry name" value="ABC_SMC2_euk"/>
    <property type="match status" value="1"/>
</dbReference>
<dbReference type="FunFam" id="3.40.50.300:FF:001396">
    <property type="entry name" value="Structural maintenance of chromosomes protein"/>
    <property type="match status" value="1"/>
</dbReference>
<dbReference type="Gene3D" id="1.20.1060.20">
    <property type="match status" value="1"/>
</dbReference>
<dbReference type="Gene3D" id="1.20.5.170">
    <property type="match status" value="1"/>
</dbReference>
<dbReference type="Gene3D" id="3.30.70.1620">
    <property type="match status" value="1"/>
</dbReference>
<dbReference type="Gene3D" id="3.40.50.300">
    <property type="entry name" value="P-loop containing nucleotide triphosphate hydrolases"/>
    <property type="match status" value="2"/>
</dbReference>
<dbReference type="InterPro" id="IPR027417">
    <property type="entry name" value="P-loop_NTPase"/>
</dbReference>
<dbReference type="InterPro" id="IPR003395">
    <property type="entry name" value="RecF/RecN/SMC_N"/>
</dbReference>
<dbReference type="InterPro" id="IPR024704">
    <property type="entry name" value="SMC"/>
</dbReference>
<dbReference type="InterPro" id="IPR027120">
    <property type="entry name" value="Smc2_ABC"/>
</dbReference>
<dbReference type="InterPro" id="IPR010935">
    <property type="entry name" value="SMC_hinge"/>
</dbReference>
<dbReference type="InterPro" id="IPR036277">
    <property type="entry name" value="SMC_hinge_sf"/>
</dbReference>
<dbReference type="PANTHER" id="PTHR43977">
    <property type="entry name" value="STRUCTURAL MAINTENANCE OF CHROMOSOMES PROTEIN 3"/>
    <property type="match status" value="1"/>
</dbReference>
<dbReference type="Pfam" id="PF06470">
    <property type="entry name" value="SMC_hinge"/>
    <property type="match status" value="1"/>
</dbReference>
<dbReference type="Pfam" id="PF02463">
    <property type="entry name" value="SMC_N"/>
    <property type="match status" value="1"/>
</dbReference>
<dbReference type="PIRSF" id="PIRSF005719">
    <property type="entry name" value="SMC"/>
    <property type="match status" value="1"/>
</dbReference>
<dbReference type="SMART" id="SM00968">
    <property type="entry name" value="SMC_hinge"/>
    <property type="match status" value="1"/>
</dbReference>
<dbReference type="SUPFAM" id="SSF52540">
    <property type="entry name" value="P-loop containing nucleoside triphosphate hydrolases"/>
    <property type="match status" value="1"/>
</dbReference>
<dbReference type="SUPFAM" id="SSF75553">
    <property type="entry name" value="Smc hinge domain"/>
    <property type="match status" value="1"/>
</dbReference>
<dbReference type="SUPFAM" id="SSF57997">
    <property type="entry name" value="Tropomyosin"/>
    <property type="match status" value="1"/>
</dbReference>
<accession>Q8IED2</accession>
<gene>
    <name type="ORF">MAL13P1.96</name>
</gene>
<name>SMC2_PLAF7</name>
<comment type="function">
    <text evidence="1">May play a role in the conversion of interphase chromatin into condensed chromosomes.</text>
</comment>
<comment type="subcellular location">
    <subcellularLocation>
        <location evidence="2">Nucleus</location>
    </subcellularLocation>
</comment>
<comment type="domain">
    <text evidence="3">The SMC hinge domain, which separates the large intramolecular coiled coil regions, allows the heterodimerization with smc4 forming a V-shaped heterodimer.</text>
</comment>
<comment type="biotechnology">
    <text evidence="5">Possible candidate for an effective malaria vaccine as determined by epitope response in sera.</text>
</comment>
<comment type="similarity">
    <text evidence="4">Belongs to the SMC family. SMC2 subfamily.</text>
</comment>
<keyword id="KW-0067">ATP-binding</keyword>
<keyword id="KW-0131">Cell cycle</keyword>
<keyword id="KW-0132">Cell division</keyword>
<keyword id="KW-0175">Coiled coil</keyword>
<keyword id="KW-0226">DNA condensation</keyword>
<keyword id="KW-0477">Merozoite</keyword>
<keyword id="KW-0498">Mitosis</keyword>
<keyword id="KW-0547">Nucleotide-binding</keyword>
<keyword id="KW-0539">Nucleus</keyword>
<keyword id="KW-1185">Reference proteome</keyword>
<reference key="1">
    <citation type="journal article" date="2002" name="Nature">
        <title>Genome sequence of the human malaria parasite Plasmodium falciparum.</title>
        <authorList>
            <person name="Gardner M.J."/>
            <person name="Hall N."/>
            <person name="Fung E."/>
            <person name="White O."/>
            <person name="Berriman M."/>
            <person name="Hyman R.W."/>
            <person name="Carlton J.M."/>
            <person name="Pain A."/>
            <person name="Nelson K.E."/>
            <person name="Bowman S."/>
            <person name="Paulsen I.T."/>
            <person name="James K.D."/>
            <person name="Eisen J.A."/>
            <person name="Rutherford K.M."/>
            <person name="Salzberg S.L."/>
            <person name="Craig A."/>
            <person name="Kyes S."/>
            <person name="Chan M.-S."/>
            <person name="Nene V."/>
            <person name="Shallom S.J."/>
            <person name="Suh B."/>
            <person name="Peterson J."/>
            <person name="Angiuoli S."/>
            <person name="Pertea M."/>
            <person name="Allen J."/>
            <person name="Selengut J."/>
            <person name="Haft D."/>
            <person name="Mather M.W."/>
            <person name="Vaidya A.B."/>
            <person name="Martin D.M.A."/>
            <person name="Fairlamb A.H."/>
            <person name="Fraunholz M.J."/>
            <person name="Roos D.S."/>
            <person name="Ralph S.A."/>
            <person name="McFadden G.I."/>
            <person name="Cummings L.M."/>
            <person name="Subramanian G.M."/>
            <person name="Mungall C."/>
            <person name="Venter J.C."/>
            <person name="Carucci D.J."/>
            <person name="Hoffman S.L."/>
            <person name="Newbold C."/>
            <person name="Davis R.W."/>
            <person name="Fraser C.M."/>
            <person name="Barrell B.G."/>
        </authorList>
    </citation>
    <scope>NUCLEOTIDE SEQUENCE [LARGE SCALE GENOMIC DNA]</scope>
    <source>
        <strain>3D7</strain>
    </source>
</reference>
<reference key="2">
    <citation type="journal article" date="2002" name="Nature">
        <title>Sequence of Plasmodium falciparum chromosomes 1, 3-9 and 13.</title>
        <authorList>
            <person name="Hall N."/>
            <person name="Pain A."/>
            <person name="Berriman M."/>
            <person name="Churcher C.M."/>
            <person name="Harris B."/>
            <person name="Harris D."/>
            <person name="Mungall K.L."/>
            <person name="Bowman S."/>
            <person name="Atkin R."/>
            <person name="Baker S."/>
            <person name="Barron A."/>
            <person name="Brooks K."/>
            <person name="Buckee C.O."/>
            <person name="Burrows C."/>
            <person name="Cherevach I."/>
            <person name="Chillingworth C."/>
            <person name="Chillingworth T."/>
            <person name="Christodoulou Z."/>
            <person name="Clark L."/>
            <person name="Clark R."/>
            <person name="Corton C."/>
            <person name="Cronin A."/>
            <person name="Davies R.M."/>
            <person name="Davis P."/>
            <person name="Dear P."/>
            <person name="Dearden F."/>
            <person name="Doggett J."/>
            <person name="Feltwell T."/>
            <person name="Goble A."/>
            <person name="Goodhead I."/>
            <person name="Gwilliam R."/>
            <person name="Hamlin N."/>
            <person name="Hance Z."/>
            <person name="Harper D."/>
            <person name="Hauser H."/>
            <person name="Hornsby T."/>
            <person name="Holroyd S."/>
            <person name="Horrocks P."/>
            <person name="Humphray S."/>
            <person name="Jagels K."/>
            <person name="James K.D."/>
            <person name="Johnson D."/>
            <person name="Kerhornou A."/>
            <person name="Knights A."/>
            <person name="Konfortov B."/>
            <person name="Kyes S."/>
            <person name="Larke N."/>
            <person name="Lawson D."/>
            <person name="Lennard N."/>
            <person name="Line A."/>
            <person name="Maddison M."/>
            <person name="Mclean J."/>
            <person name="Mooney P."/>
            <person name="Moule S."/>
            <person name="Murphy L."/>
            <person name="Oliver K."/>
            <person name="Ormond D."/>
            <person name="Price C."/>
            <person name="Quail M.A."/>
            <person name="Rabbinowitsch E."/>
            <person name="Rajandream M.A."/>
            <person name="Rutter S."/>
            <person name="Rutherford K.M."/>
            <person name="Sanders M."/>
            <person name="Simmonds M."/>
            <person name="Seeger K."/>
            <person name="Sharp S."/>
            <person name="Smith R."/>
            <person name="Squares R."/>
            <person name="Squares S."/>
            <person name="Stevens K."/>
            <person name="Taylor K."/>
            <person name="Tivey A."/>
            <person name="Unwin L."/>
            <person name="Whitehead S."/>
            <person name="Woodward J.R."/>
            <person name="Sulston J.E."/>
            <person name="Craig A."/>
            <person name="Newbold C."/>
            <person name="Barrell B.G."/>
        </authorList>
    </citation>
    <scope>NUCLEOTIDE SEQUENCE [LARGE SCALE GENOMIC DNA]</scope>
    <source>
        <strain>3D7</strain>
    </source>
</reference>
<reference evidence="6" key="3">
    <citation type="journal article" date="2007" name="PLoS ONE">
        <title>Rapid identification of malaria vaccine candidates based on alpha-helical coiled coil protein motif.</title>
        <authorList>
            <person name="Villard V."/>
            <person name="Agak G.W."/>
            <person name="Frank G."/>
            <person name="Jafarshad A."/>
            <person name="Servis C."/>
            <person name="Nebie I."/>
            <person name="Sirima S.B."/>
            <person name="Felger I."/>
            <person name="Arevalo-Herrera M."/>
            <person name="Herrera S."/>
            <person name="Heitz F."/>
            <person name="Baecker V."/>
            <person name="Druilhe P."/>
            <person name="Kajava A.V."/>
            <person name="Corradin G."/>
        </authorList>
    </citation>
    <scope>SYNTHESIS OF 862-918</scope>
    <scope>POSSIBLE CANDIDATE MALARIA EPITOPE</scope>
</reference>
<protein>
    <recommendedName>
        <fullName evidence="2">Structural maintenance of chromosomes protein 2</fullName>
    </recommendedName>
</protein>
<evidence type="ECO:0000250" key="1"/>
<evidence type="ECO:0000250" key="2">
    <source>
        <dbReference type="UniProtKB" id="O95347"/>
    </source>
</evidence>
<evidence type="ECO:0000250" key="3">
    <source>
        <dbReference type="UniProtKB" id="Q9C5Y4"/>
    </source>
</evidence>
<evidence type="ECO:0000255" key="4"/>
<evidence type="ECO:0000269" key="5">
    <source>
    </source>
</evidence>
<evidence type="ECO:0000305" key="6"/>